<sequence>MSMPFRVLGIETSCDETAAAVVEPAADGRGGRIMAEALLSQVEEHRPYGGVVPEIAARSHLDHVDSLVIRALGEAGLTVHDIDAVAATGGPGLIGGVIVGVMTAKAIAQVAGKPFIAVNHLEGHALTVRMTAGIDFPYLLLLASGGHCQLLAVEGVGRAKRLGTTIDDAAGEAFDKVAKMLGLGYPGGPAVERAARRGDPRRFRLPRPLLDRPGCDLSFSGLKTAVRQTVEKLPPGPLSEGDIADLCASFQAAVADCLADRCRVAAGIFSARHGRGRPLVVAGGVAANASLRAALTEVARQADMTFVAPPLALCTDNAAMIAWVGVERLRLGLVDTMDFKPRPRWPLDPDAPKAAGAGGVKA</sequence>
<accession>Q2RND2</accession>
<proteinExistence type="inferred from homology"/>
<comment type="function">
    <text evidence="1">Required for the formation of a threonylcarbamoyl group on adenosine at position 37 (t(6)A37) in tRNAs that read codons beginning with adenine. Is involved in the transfer of the threonylcarbamoyl moiety of threonylcarbamoyl-AMP (TC-AMP) to the N6 group of A37, together with TsaE and TsaB. TsaD likely plays a direct catalytic role in this reaction.</text>
</comment>
<comment type="catalytic activity">
    <reaction evidence="1">
        <text>L-threonylcarbamoyladenylate + adenosine(37) in tRNA = N(6)-L-threonylcarbamoyladenosine(37) in tRNA + AMP + H(+)</text>
        <dbReference type="Rhea" id="RHEA:37059"/>
        <dbReference type="Rhea" id="RHEA-COMP:10162"/>
        <dbReference type="Rhea" id="RHEA-COMP:10163"/>
        <dbReference type="ChEBI" id="CHEBI:15378"/>
        <dbReference type="ChEBI" id="CHEBI:73682"/>
        <dbReference type="ChEBI" id="CHEBI:74411"/>
        <dbReference type="ChEBI" id="CHEBI:74418"/>
        <dbReference type="ChEBI" id="CHEBI:456215"/>
        <dbReference type="EC" id="2.3.1.234"/>
    </reaction>
</comment>
<comment type="cofactor">
    <cofactor evidence="1">
        <name>Fe(2+)</name>
        <dbReference type="ChEBI" id="CHEBI:29033"/>
    </cofactor>
    <text evidence="1">Binds 1 Fe(2+) ion per subunit.</text>
</comment>
<comment type="subcellular location">
    <subcellularLocation>
        <location evidence="1">Cytoplasm</location>
    </subcellularLocation>
</comment>
<comment type="similarity">
    <text evidence="1">Belongs to the KAE1 / TsaD family.</text>
</comment>
<comment type="sequence caution" evidence="3">
    <conflict type="erroneous initiation">
        <sequence resource="EMBL-CDS" id="ABC24363"/>
    </conflict>
</comment>
<evidence type="ECO:0000255" key="1">
    <source>
        <dbReference type="HAMAP-Rule" id="MF_01445"/>
    </source>
</evidence>
<evidence type="ECO:0000256" key="2">
    <source>
        <dbReference type="SAM" id="MobiDB-lite"/>
    </source>
</evidence>
<evidence type="ECO:0000305" key="3"/>
<organism>
    <name type="scientific">Rhodospirillum rubrum (strain ATCC 11170 / ATH 1.1.1 / DSM 467 / LMG 4362 / NCIMB 8255 / S1)</name>
    <dbReference type="NCBI Taxonomy" id="269796"/>
    <lineage>
        <taxon>Bacteria</taxon>
        <taxon>Pseudomonadati</taxon>
        <taxon>Pseudomonadota</taxon>
        <taxon>Alphaproteobacteria</taxon>
        <taxon>Rhodospirillales</taxon>
        <taxon>Rhodospirillaceae</taxon>
        <taxon>Rhodospirillum</taxon>
    </lineage>
</organism>
<reference key="1">
    <citation type="journal article" date="2011" name="Stand. Genomic Sci.">
        <title>Complete genome sequence of Rhodospirillum rubrum type strain (S1).</title>
        <authorList>
            <person name="Munk A.C."/>
            <person name="Copeland A."/>
            <person name="Lucas S."/>
            <person name="Lapidus A."/>
            <person name="Del Rio T.G."/>
            <person name="Barry K."/>
            <person name="Detter J.C."/>
            <person name="Hammon N."/>
            <person name="Israni S."/>
            <person name="Pitluck S."/>
            <person name="Brettin T."/>
            <person name="Bruce D."/>
            <person name="Han C."/>
            <person name="Tapia R."/>
            <person name="Gilna P."/>
            <person name="Schmutz J."/>
            <person name="Larimer F."/>
            <person name="Land M."/>
            <person name="Kyrpides N.C."/>
            <person name="Mavromatis K."/>
            <person name="Richardson P."/>
            <person name="Rohde M."/>
            <person name="Goeker M."/>
            <person name="Klenk H.P."/>
            <person name="Zhang Y."/>
            <person name="Roberts G.P."/>
            <person name="Reslewic S."/>
            <person name="Schwartz D.C."/>
        </authorList>
    </citation>
    <scope>NUCLEOTIDE SEQUENCE [LARGE SCALE GENOMIC DNA]</scope>
    <source>
        <strain>ATCC 11170 / ATH 1.1.1 / DSM 467 / LMG 4362 / NCIMB 8255 / S1</strain>
    </source>
</reference>
<dbReference type="EC" id="2.3.1.234" evidence="1"/>
<dbReference type="EMBL" id="CP000230">
    <property type="protein sequence ID" value="ABC24363.1"/>
    <property type="status" value="ALT_INIT"/>
    <property type="molecule type" value="Genomic_DNA"/>
</dbReference>
<dbReference type="RefSeq" id="WP_014626621.1">
    <property type="nucleotide sequence ID" value="NC_007643.1"/>
</dbReference>
<dbReference type="RefSeq" id="YP_428650.1">
    <property type="nucleotide sequence ID" value="NC_007643.1"/>
</dbReference>
<dbReference type="SMR" id="Q2RND2"/>
<dbReference type="STRING" id="269796.Rru_A3569"/>
<dbReference type="EnsemblBacteria" id="ABC24363">
    <property type="protein sequence ID" value="ABC24363"/>
    <property type="gene ID" value="Rru_A3569"/>
</dbReference>
<dbReference type="KEGG" id="rru:Rru_A3569"/>
<dbReference type="PATRIC" id="fig|269796.9.peg.3690"/>
<dbReference type="eggNOG" id="COG0533">
    <property type="taxonomic scope" value="Bacteria"/>
</dbReference>
<dbReference type="HOGENOM" id="CLU_023208_0_2_5"/>
<dbReference type="Proteomes" id="UP000001929">
    <property type="component" value="Chromosome"/>
</dbReference>
<dbReference type="GO" id="GO:0005737">
    <property type="term" value="C:cytoplasm"/>
    <property type="evidence" value="ECO:0007669"/>
    <property type="project" value="UniProtKB-SubCell"/>
</dbReference>
<dbReference type="GO" id="GO:0005506">
    <property type="term" value="F:iron ion binding"/>
    <property type="evidence" value="ECO:0007669"/>
    <property type="project" value="UniProtKB-UniRule"/>
</dbReference>
<dbReference type="GO" id="GO:0061711">
    <property type="term" value="F:N(6)-L-threonylcarbamoyladenine synthase activity"/>
    <property type="evidence" value="ECO:0007669"/>
    <property type="project" value="UniProtKB-EC"/>
</dbReference>
<dbReference type="GO" id="GO:0002949">
    <property type="term" value="P:tRNA threonylcarbamoyladenosine modification"/>
    <property type="evidence" value="ECO:0007669"/>
    <property type="project" value="UniProtKB-UniRule"/>
</dbReference>
<dbReference type="CDD" id="cd24133">
    <property type="entry name" value="ASKHA_NBD_TsaD_bac"/>
    <property type="match status" value="1"/>
</dbReference>
<dbReference type="FunFam" id="3.30.420.40:FF:000040">
    <property type="entry name" value="tRNA N6-adenosine threonylcarbamoyltransferase"/>
    <property type="match status" value="1"/>
</dbReference>
<dbReference type="Gene3D" id="3.30.420.40">
    <property type="match status" value="2"/>
</dbReference>
<dbReference type="HAMAP" id="MF_01445">
    <property type="entry name" value="TsaD"/>
    <property type="match status" value="1"/>
</dbReference>
<dbReference type="InterPro" id="IPR043129">
    <property type="entry name" value="ATPase_NBD"/>
</dbReference>
<dbReference type="InterPro" id="IPR000905">
    <property type="entry name" value="Gcp-like_dom"/>
</dbReference>
<dbReference type="InterPro" id="IPR017861">
    <property type="entry name" value="KAE1/TsaD"/>
</dbReference>
<dbReference type="InterPro" id="IPR022450">
    <property type="entry name" value="TsaD"/>
</dbReference>
<dbReference type="NCBIfam" id="TIGR00329">
    <property type="entry name" value="gcp_kae1"/>
    <property type="match status" value="1"/>
</dbReference>
<dbReference type="NCBIfam" id="TIGR03723">
    <property type="entry name" value="T6A_TsaD_YgjD"/>
    <property type="match status" value="1"/>
</dbReference>
<dbReference type="PANTHER" id="PTHR11735">
    <property type="entry name" value="TRNA N6-ADENOSINE THREONYLCARBAMOYLTRANSFERASE"/>
    <property type="match status" value="1"/>
</dbReference>
<dbReference type="PANTHER" id="PTHR11735:SF6">
    <property type="entry name" value="TRNA N6-ADENOSINE THREONYLCARBAMOYLTRANSFERASE, MITOCHONDRIAL"/>
    <property type="match status" value="1"/>
</dbReference>
<dbReference type="Pfam" id="PF00814">
    <property type="entry name" value="TsaD"/>
    <property type="match status" value="1"/>
</dbReference>
<dbReference type="PRINTS" id="PR00789">
    <property type="entry name" value="OSIALOPTASE"/>
</dbReference>
<dbReference type="SUPFAM" id="SSF53067">
    <property type="entry name" value="Actin-like ATPase domain"/>
    <property type="match status" value="2"/>
</dbReference>
<feature type="chain" id="PRO_0000303521" description="tRNA N6-adenosine threonylcarbamoyltransferase">
    <location>
        <begin position="1"/>
        <end position="362"/>
    </location>
</feature>
<feature type="region of interest" description="Disordered" evidence="2">
    <location>
        <begin position="342"/>
        <end position="362"/>
    </location>
</feature>
<feature type="compositionally biased region" description="Basic and acidic residues" evidence="2">
    <location>
        <begin position="342"/>
        <end position="351"/>
    </location>
</feature>
<feature type="binding site" evidence="1">
    <location>
        <position position="120"/>
    </location>
    <ligand>
        <name>Fe cation</name>
        <dbReference type="ChEBI" id="CHEBI:24875"/>
    </ligand>
</feature>
<feature type="binding site" evidence="1">
    <location>
        <position position="124"/>
    </location>
    <ligand>
        <name>Fe cation</name>
        <dbReference type="ChEBI" id="CHEBI:24875"/>
    </ligand>
</feature>
<feature type="binding site" evidence="1">
    <location>
        <begin position="142"/>
        <end position="146"/>
    </location>
    <ligand>
        <name>substrate</name>
    </ligand>
</feature>
<feature type="binding site" evidence="1">
    <location>
        <position position="175"/>
    </location>
    <ligand>
        <name>substrate</name>
    </ligand>
</feature>
<feature type="binding site" evidence="1">
    <location>
        <position position="188"/>
    </location>
    <ligand>
        <name>substrate</name>
    </ligand>
</feature>
<feature type="binding site" evidence="1">
    <location>
        <position position="288"/>
    </location>
    <ligand>
        <name>substrate</name>
    </ligand>
</feature>
<feature type="binding site" evidence="1">
    <location>
        <position position="316"/>
    </location>
    <ligand>
        <name>Fe cation</name>
        <dbReference type="ChEBI" id="CHEBI:24875"/>
    </ligand>
</feature>
<keyword id="KW-0012">Acyltransferase</keyword>
<keyword id="KW-0963">Cytoplasm</keyword>
<keyword id="KW-0408">Iron</keyword>
<keyword id="KW-0479">Metal-binding</keyword>
<keyword id="KW-1185">Reference proteome</keyword>
<keyword id="KW-0808">Transferase</keyword>
<keyword id="KW-0819">tRNA processing</keyword>
<protein>
    <recommendedName>
        <fullName evidence="1">tRNA N6-adenosine threonylcarbamoyltransferase</fullName>
        <ecNumber evidence="1">2.3.1.234</ecNumber>
    </recommendedName>
    <alternativeName>
        <fullName evidence="1">N6-L-threonylcarbamoyladenine synthase</fullName>
        <shortName evidence="1">t(6)A synthase</shortName>
    </alternativeName>
    <alternativeName>
        <fullName evidence="1">t(6)A37 threonylcarbamoyladenosine biosynthesis protein TsaD</fullName>
    </alternativeName>
    <alternativeName>
        <fullName evidence="1">tRNA threonylcarbamoyladenosine biosynthesis protein TsaD</fullName>
    </alternativeName>
</protein>
<gene>
    <name evidence="1" type="primary">tsaD</name>
    <name type="synonym">gcp</name>
    <name type="ordered locus">Rru_A3569</name>
</gene>
<name>TSAD_RHORT</name>